<keyword id="KW-0028">Amino-acid biosynthesis</keyword>
<keyword id="KW-0963">Cytoplasm</keyword>
<keyword id="KW-0368">Histidine biosynthesis</keyword>
<keyword id="KW-0378">Hydrolase</keyword>
<keyword id="KW-0460">Magnesium</keyword>
<keyword id="KW-0479">Metal-binding</keyword>
<keyword id="KW-0614">Plasmid</keyword>
<keyword id="KW-0862">Zinc</keyword>
<sequence>MNQNLLWFEKLKFNNQDLIPAIAQDYRDGTVLMMAWMNSESIQKTLSTGEAHYWSRSRSQLWHKGATSGHIQKVKELFYDCDGDTILLKVEQIGDIACHTGARSCFFNAVPIYPQS</sequence>
<feature type="chain" id="PRO_0000229807" description="Phosphoribosyl-AMP cyclohydrolase">
    <location>
        <begin position="1"/>
        <end position="116"/>
    </location>
</feature>
<feature type="binding site" evidence="1">
    <location>
        <position position="80"/>
    </location>
    <ligand>
        <name>Mg(2+)</name>
        <dbReference type="ChEBI" id="CHEBI:18420"/>
    </ligand>
</feature>
<feature type="binding site" evidence="1">
    <location>
        <position position="81"/>
    </location>
    <ligand>
        <name>Zn(2+)</name>
        <dbReference type="ChEBI" id="CHEBI:29105"/>
        <note>ligand shared between dimeric partners</note>
    </ligand>
</feature>
<feature type="binding site" evidence="1">
    <location>
        <position position="82"/>
    </location>
    <ligand>
        <name>Mg(2+)</name>
        <dbReference type="ChEBI" id="CHEBI:18420"/>
    </ligand>
</feature>
<feature type="binding site" evidence="1">
    <location>
        <position position="84"/>
    </location>
    <ligand>
        <name>Mg(2+)</name>
        <dbReference type="ChEBI" id="CHEBI:18420"/>
    </ligand>
</feature>
<feature type="binding site" evidence="1">
    <location>
        <position position="98"/>
    </location>
    <ligand>
        <name>Zn(2+)</name>
        <dbReference type="ChEBI" id="CHEBI:29105"/>
        <note>ligand shared between dimeric partners</note>
    </ligand>
</feature>
<feature type="binding site" evidence="1">
    <location>
        <position position="105"/>
    </location>
    <ligand>
        <name>Zn(2+)</name>
        <dbReference type="ChEBI" id="CHEBI:29105"/>
        <note>ligand shared between dimeric partners</note>
    </ligand>
</feature>
<comment type="function">
    <text evidence="1">Catalyzes the hydrolysis of the adenine ring of phosphoribosyl-AMP.</text>
</comment>
<comment type="catalytic activity">
    <reaction evidence="1">
        <text>1-(5-phospho-beta-D-ribosyl)-5'-AMP + H2O = 1-(5-phospho-beta-D-ribosyl)-5-[(5-phospho-beta-D-ribosylamino)methylideneamino]imidazole-4-carboxamide</text>
        <dbReference type="Rhea" id="RHEA:20049"/>
        <dbReference type="ChEBI" id="CHEBI:15377"/>
        <dbReference type="ChEBI" id="CHEBI:58435"/>
        <dbReference type="ChEBI" id="CHEBI:59457"/>
        <dbReference type="EC" id="3.5.4.19"/>
    </reaction>
</comment>
<comment type="cofactor">
    <cofactor evidence="1">
        <name>Mg(2+)</name>
        <dbReference type="ChEBI" id="CHEBI:18420"/>
    </cofactor>
    <text evidence="1">Binds 1 Mg(2+) ion per subunit.</text>
</comment>
<comment type="cofactor">
    <cofactor evidence="1">
        <name>Zn(2+)</name>
        <dbReference type="ChEBI" id="CHEBI:29105"/>
    </cofactor>
    <text evidence="1">Binds 1 zinc ion per subunit.</text>
</comment>
<comment type="pathway">
    <text evidence="1">Amino-acid biosynthesis; L-histidine biosynthesis; L-histidine from 5-phospho-alpha-D-ribose 1-diphosphate: step 3/9.</text>
</comment>
<comment type="subunit">
    <text evidence="1">Homodimer.</text>
</comment>
<comment type="subcellular location">
    <subcellularLocation>
        <location evidence="1">Cytoplasm</location>
    </subcellularLocation>
</comment>
<comment type="similarity">
    <text evidence="1">Belongs to the PRA-CH family.</text>
</comment>
<protein>
    <recommendedName>
        <fullName evidence="1">Phosphoribosyl-AMP cyclohydrolase</fullName>
        <shortName evidence="1">PRA-CH</shortName>
        <ecNumber evidence="1">3.5.4.19</ecNumber>
    </recommendedName>
</protein>
<evidence type="ECO:0000255" key="1">
    <source>
        <dbReference type="HAMAP-Rule" id="MF_01021"/>
    </source>
</evidence>
<proteinExistence type="inferred from homology"/>
<gene>
    <name evidence="1" type="primary">hisI</name>
    <name type="ordered locus">Ava_B0230</name>
</gene>
<geneLocation type="plasmid">
    <name>pAnaA</name>
</geneLocation>
<organism>
    <name type="scientific">Trichormus variabilis (strain ATCC 29413 / PCC 7937)</name>
    <name type="common">Anabaena variabilis</name>
    <dbReference type="NCBI Taxonomy" id="240292"/>
    <lineage>
        <taxon>Bacteria</taxon>
        <taxon>Bacillati</taxon>
        <taxon>Cyanobacteriota</taxon>
        <taxon>Cyanophyceae</taxon>
        <taxon>Nostocales</taxon>
        <taxon>Nostocaceae</taxon>
        <taxon>Trichormus</taxon>
    </lineage>
</organism>
<dbReference type="EC" id="3.5.4.19" evidence="1"/>
<dbReference type="EMBL" id="CP000119">
    <property type="protein sequence ID" value="ABA24942.1"/>
    <property type="molecule type" value="Genomic_DNA"/>
</dbReference>
<dbReference type="SMR" id="Q3M244"/>
<dbReference type="KEGG" id="ava:Ava_B0230"/>
<dbReference type="HOGENOM" id="CLU_048577_5_3_3"/>
<dbReference type="UniPathway" id="UPA00031">
    <property type="reaction ID" value="UER00008"/>
</dbReference>
<dbReference type="Proteomes" id="UP000002533">
    <property type="component" value="Plasmid pAnaA"/>
</dbReference>
<dbReference type="GO" id="GO:0005737">
    <property type="term" value="C:cytoplasm"/>
    <property type="evidence" value="ECO:0007669"/>
    <property type="project" value="UniProtKB-SubCell"/>
</dbReference>
<dbReference type="GO" id="GO:0000287">
    <property type="term" value="F:magnesium ion binding"/>
    <property type="evidence" value="ECO:0007669"/>
    <property type="project" value="UniProtKB-UniRule"/>
</dbReference>
<dbReference type="GO" id="GO:0004635">
    <property type="term" value="F:phosphoribosyl-AMP cyclohydrolase activity"/>
    <property type="evidence" value="ECO:0007669"/>
    <property type="project" value="UniProtKB-UniRule"/>
</dbReference>
<dbReference type="GO" id="GO:0008270">
    <property type="term" value="F:zinc ion binding"/>
    <property type="evidence" value="ECO:0007669"/>
    <property type="project" value="UniProtKB-UniRule"/>
</dbReference>
<dbReference type="GO" id="GO:0000105">
    <property type="term" value="P:L-histidine biosynthetic process"/>
    <property type="evidence" value="ECO:0007669"/>
    <property type="project" value="UniProtKB-UniRule"/>
</dbReference>
<dbReference type="FunFam" id="3.10.20.810:FF:000001">
    <property type="entry name" value="Histidine biosynthesis bifunctional protein HisIE"/>
    <property type="match status" value="1"/>
</dbReference>
<dbReference type="Gene3D" id="3.10.20.810">
    <property type="entry name" value="Phosphoribosyl-AMP cyclohydrolase"/>
    <property type="match status" value="1"/>
</dbReference>
<dbReference type="HAMAP" id="MF_01021">
    <property type="entry name" value="HisI"/>
    <property type="match status" value="1"/>
</dbReference>
<dbReference type="InterPro" id="IPR026660">
    <property type="entry name" value="PRA-CH"/>
</dbReference>
<dbReference type="InterPro" id="IPR002496">
    <property type="entry name" value="PRib_AMP_CycHydrolase_dom"/>
</dbReference>
<dbReference type="InterPro" id="IPR038019">
    <property type="entry name" value="PRib_AMP_CycHydrolase_sf"/>
</dbReference>
<dbReference type="NCBIfam" id="NF000768">
    <property type="entry name" value="PRK00051.1"/>
    <property type="match status" value="1"/>
</dbReference>
<dbReference type="PANTHER" id="PTHR42945">
    <property type="entry name" value="HISTIDINE BIOSYNTHESIS BIFUNCTIONAL PROTEIN"/>
    <property type="match status" value="1"/>
</dbReference>
<dbReference type="PANTHER" id="PTHR42945:SF1">
    <property type="entry name" value="HISTIDINE BIOSYNTHESIS BIFUNCTIONAL PROTEIN HIS7"/>
    <property type="match status" value="1"/>
</dbReference>
<dbReference type="Pfam" id="PF01502">
    <property type="entry name" value="PRA-CH"/>
    <property type="match status" value="1"/>
</dbReference>
<dbReference type="SUPFAM" id="SSF141734">
    <property type="entry name" value="HisI-like"/>
    <property type="match status" value="1"/>
</dbReference>
<name>HIS3_TRIV2</name>
<reference key="1">
    <citation type="journal article" date="2014" name="Stand. Genomic Sci.">
        <title>Complete genome sequence of Anabaena variabilis ATCC 29413.</title>
        <authorList>
            <person name="Thiel T."/>
            <person name="Pratte B.S."/>
            <person name="Zhong J."/>
            <person name="Goodwin L."/>
            <person name="Copeland A."/>
            <person name="Lucas S."/>
            <person name="Han C."/>
            <person name="Pitluck S."/>
            <person name="Land M.L."/>
            <person name="Kyrpides N.C."/>
            <person name="Woyke T."/>
        </authorList>
    </citation>
    <scope>NUCLEOTIDE SEQUENCE [LARGE SCALE GENOMIC DNA]</scope>
    <source>
        <strain>ATCC 29413 / PCC 7937</strain>
    </source>
</reference>
<accession>Q3M244</accession>